<gene>
    <name type="primary">IRC22</name>
    <name type="ORF">EC1118_1E8_0925g</name>
</gene>
<name>IRC22_YEAS8</name>
<protein>
    <recommendedName>
        <fullName>Increased recombination centers protein 22</fullName>
    </recommendedName>
</protein>
<keyword id="KW-0256">Endoplasmic reticulum</keyword>
<keyword id="KW-0472">Membrane</keyword>
<keyword id="KW-0732">Signal</keyword>
<keyword id="KW-0812">Transmembrane</keyword>
<keyword id="KW-1133">Transmembrane helix</keyword>
<organism>
    <name type="scientific">Saccharomyces cerevisiae (strain Lalvin EC1118 / Prise de mousse)</name>
    <name type="common">Baker's yeast</name>
    <dbReference type="NCBI Taxonomy" id="643680"/>
    <lineage>
        <taxon>Eukaryota</taxon>
        <taxon>Fungi</taxon>
        <taxon>Dikarya</taxon>
        <taxon>Ascomycota</taxon>
        <taxon>Saccharomycotina</taxon>
        <taxon>Saccharomycetes</taxon>
        <taxon>Saccharomycetales</taxon>
        <taxon>Saccharomycetaceae</taxon>
        <taxon>Saccharomyces</taxon>
    </lineage>
</organism>
<evidence type="ECO:0000250" key="1"/>
<evidence type="ECO:0000255" key="2"/>
<evidence type="ECO:0000256" key="3">
    <source>
        <dbReference type="SAM" id="MobiDB-lite"/>
    </source>
</evidence>
<evidence type="ECO:0000305" key="4"/>
<feature type="signal peptide" evidence="2">
    <location>
        <begin position="1"/>
        <end position="21"/>
    </location>
</feature>
<feature type="chain" id="PRO_0000399090" description="Increased recombination centers protein 22">
    <location>
        <begin position="22"/>
        <end position="225"/>
    </location>
</feature>
<feature type="topological domain" description="Lumenal" evidence="2">
    <location>
        <begin position="22"/>
        <end position="169"/>
    </location>
</feature>
<feature type="transmembrane region" description="Helical" evidence="2">
    <location>
        <begin position="170"/>
        <end position="190"/>
    </location>
</feature>
<feature type="topological domain" description="Cytoplasmic" evidence="2">
    <location>
        <begin position="191"/>
        <end position="225"/>
    </location>
</feature>
<feature type="region of interest" description="Disordered" evidence="3">
    <location>
        <begin position="203"/>
        <end position="225"/>
    </location>
</feature>
<feature type="compositionally biased region" description="Basic and acidic residues" evidence="3">
    <location>
        <begin position="212"/>
        <end position="225"/>
    </location>
</feature>
<dbReference type="EMBL" id="FN393067">
    <property type="protein sequence ID" value="CAY79164.1"/>
    <property type="molecule type" value="Genomic_DNA"/>
</dbReference>
<dbReference type="HOGENOM" id="CLU_078554_1_0_1"/>
<dbReference type="OrthoDB" id="11791at4893"/>
<dbReference type="Proteomes" id="UP000000286">
    <property type="component" value="Chromosome V, Scaffold EC1118_1E8"/>
</dbReference>
<dbReference type="GO" id="GO:0005789">
    <property type="term" value="C:endoplasmic reticulum membrane"/>
    <property type="evidence" value="ECO:0007669"/>
    <property type="project" value="UniProtKB-SubCell"/>
</dbReference>
<dbReference type="InterPro" id="IPR005595">
    <property type="entry name" value="TRAP_alpha"/>
</dbReference>
<dbReference type="Pfam" id="PF03896">
    <property type="entry name" value="TRAP_alpha"/>
    <property type="match status" value="1"/>
</dbReference>
<accession>C8Z6Z8</accession>
<comment type="function">
    <text>Is probably involved in a pathway contributing to genomic integrity.</text>
</comment>
<comment type="subcellular location">
    <subcellularLocation>
        <location evidence="1">Endoplasmic reticulum membrane</location>
        <topology evidence="1">Single-pass type I membrane protein</topology>
    </subcellularLocation>
</comment>
<comment type="similarity">
    <text evidence="4">Belongs to the IRC22 family.</text>
</comment>
<reference key="1">
    <citation type="journal article" date="2009" name="Proc. Natl. Acad. Sci. U.S.A.">
        <title>Eukaryote-to-eukaryote gene transfer events revealed by the genome sequence of the wine yeast Saccharomyces cerevisiae EC1118.</title>
        <authorList>
            <person name="Novo M."/>
            <person name="Bigey F."/>
            <person name="Beyne E."/>
            <person name="Galeote V."/>
            <person name="Gavory F."/>
            <person name="Mallet S."/>
            <person name="Cambon B."/>
            <person name="Legras J.-L."/>
            <person name="Wincker P."/>
            <person name="Casaregola S."/>
            <person name="Dequin S."/>
        </authorList>
    </citation>
    <scope>NUCLEOTIDE SEQUENCE [LARGE SCALE GENOMIC DNA]</scope>
    <source>
        <strain>Lalvin EC1118 / Prise de mousse</strain>
    </source>
</reference>
<sequence length="225" mass="24992">MRFSMLIGFNLLTALSSFCAAISANNSDNVEHEQEVAEAVAPPSINIEVKYDVVGKESENHDSFLEFYAEDTATLAYNVTNWEDTNITIFGVNGTIVTYPHGYPVADITGASIGPYEMEVNGTSKFGQDVTLNLPEGQYFLIPFLLASRFDEIVRIAAPPTLFEIVSPPISFFNPQFLSVQVIFLAIIGGVSYYYMKSKTNQRPSKKSATVKKVDESWLPETYKK</sequence>
<proteinExistence type="inferred from homology"/>